<comment type="function">
    <text evidence="1">Has a post-transcriptional repressor function in flagellum biogenesis. Associates with the 5'-UTR of fljK mRNA and promotes its degradation.</text>
</comment>
<comment type="similarity">
    <text evidence="1">Belongs to the FlbT family.</text>
</comment>
<evidence type="ECO:0000255" key="1">
    <source>
        <dbReference type="HAMAP-Rule" id="MF_00783"/>
    </source>
</evidence>
<gene>
    <name evidence="1" type="primary">flbT</name>
    <name type="ordered locus">Smed_0280</name>
</gene>
<keyword id="KW-1005">Bacterial flagellum biogenesis</keyword>
<keyword id="KW-0678">Repressor</keyword>
<keyword id="KW-0694">RNA-binding</keyword>
<dbReference type="EMBL" id="CP000738">
    <property type="protein sequence ID" value="ABR59139.1"/>
    <property type="molecule type" value="Genomic_DNA"/>
</dbReference>
<dbReference type="RefSeq" id="WP_011974490.1">
    <property type="nucleotide sequence ID" value="NC_009636.1"/>
</dbReference>
<dbReference type="RefSeq" id="YP_001325974.1">
    <property type="nucleotide sequence ID" value="NC_009636.1"/>
</dbReference>
<dbReference type="STRING" id="366394.Smed_0280"/>
<dbReference type="GeneID" id="61613119"/>
<dbReference type="KEGG" id="smd:Smed_0280"/>
<dbReference type="PATRIC" id="fig|366394.8.peg.3345"/>
<dbReference type="eggNOG" id="COG5443">
    <property type="taxonomic scope" value="Bacteria"/>
</dbReference>
<dbReference type="HOGENOM" id="CLU_130913_1_0_5"/>
<dbReference type="OrthoDB" id="7932924at2"/>
<dbReference type="Proteomes" id="UP000001108">
    <property type="component" value="Chromosome"/>
</dbReference>
<dbReference type="GO" id="GO:0048027">
    <property type="term" value="F:mRNA 5'-UTR binding"/>
    <property type="evidence" value="ECO:0007669"/>
    <property type="project" value="UniProtKB-UniRule"/>
</dbReference>
<dbReference type="GO" id="GO:0044781">
    <property type="term" value="P:bacterial-type flagellum organization"/>
    <property type="evidence" value="ECO:0007669"/>
    <property type="project" value="UniProtKB-KW"/>
</dbReference>
<dbReference type="GO" id="GO:0006402">
    <property type="term" value="P:mRNA catabolic process"/>
    <property type="evidence" value="ECO:0007669"/>
    <property type="project" value="InterPro"/>
</dbReference>
<dbReference type="GO" id="GO:1902209">
    <property type="term" value="P:negative regulation of bacterial-type flagellum assembly"/>
    <property type="evidence" value="ECO:0007669"/>
    <property type="project" value="UniProtKB-UniRule"/>
</dbReference>
<dbReference type="HAMAP" id="MF_00783">
    <property type="entry name" value="FlbT"/>
    <property type="match status" value="1"/>
</dbReference>
<dbReference type="InterPro" id="IPR009967">
    <property type="entry name" value="Flagellum_FlbT"/>
</dbReference>
<dbReference type="NCBIfam" id="NF001995">
    <property type="entry name" value="PRK00794.1-1"/>
    <property type="match status" value="1"/>
</dbReference>
<dbReference type="Pfam" id="PF07378">
    <property type="entry name" value="FlbT"/>
    <property type="match status" value="1"/>
</dbReference>
<dbReference type="PIRSF" id="PIRSF009533">
    <property type="entry name" value="FlbT"/>
    <property type="match status" value="1"/>
</dbReference>
<feature type="chain" id="PRO_1000046835" description="Probable flagellum biosynthesis repressor protein FlbT">
    <location>
        <begin position="1"/>
        <end position="149"/>
    </location>
</feature>
<accession>A6U659</accession>
<name>FLBT_SINMW</name>
<organism>
    <name type="scientific">Sinorhizobium medicae (strain WSM419)</name>
    <name type="common">Ensifer medicae</name>
    <dbReference type="NCBI Taxonomy" id="366394"/>
    <lineage>
        <taxon>Bacteria</taxon>
        <taxon>Pseudomonadati</taxon>
        <taxon>Pseudomonadota</taxon>
        <taxon>Alphaproteobacteria</taxon>
        <taxon>Hyphomicrobiales</taxon>
        <taxon>Rhizobiaceae</taxon>
        <taxon>Sinorhizobium/Ensifer group</taxon>
        <taxon>Sinorhizobium</taxon>
    </lineage>
</organism>
<protein>
    <recommendedName>
        <fullName evidence="1">Probable flagellum biosynthesis repressor protein FlbT</fullName>
    </recommendedName>
</protein>
<reference key="1">
    <citation type="submission" date="2007-06" db="EMBL/GenBank/DDBJ databases">
        <title>Complete sequence of Sinorhizobium medicae WSM419 chromosome.</title>
        <authorList>
            <consortium name="US DOE Joint Genome Institute"/>
            <person name="Copeland A."/>
            <person name="Lucas S."/>
            <person name="Lapidus A."/>
            <person name="Barry K."/>
            <person name="Glavina del Rio T."/>
            <person name="Dalin E."/>
            <person name="Tice H."/>
            <person name="Pitluck S."/>
            <person name="Chain P."/>
            <person name="Malfatti S."/>
            <person name="Shin M."/>
            <person name="Vergez L."/>
            <person name="Schmutz J."/>
            <person name="Larimer F."/>
            <person name="Land M."/>
            <person name="Hauser L."/>
            <person name="Kyrpides N."/>
            <person name="Mikhailova N."/>
            <person name="Reeve W.G."/>
            <person name="Richardson P."/>
        </authorList>
    </citation>
    <scope>NUCLEOTIDE SEQUENCE [LARGE SCALE GENOMIC DNA]</scope>
    <source>
        <strain>WSM419</strain>
    </source>
</reference>
<proteinExistence type="inferred from homology"/>
<sequence length="149" mass="17016">MKSTLRISLKSGERIFVNGAVLRVDRKVAIEFLNDVTFLLENHVLQPEDATTPLRQLYFIAQMILINPEGADQSTSMFRKSIVMLVNCFRNDEVLAELKRIDGLVTQGRAFEALKAIRALYPIEDQILNAQEMTPATVEQIRKEIAPWR</sequence>